<sequence length="126" mass="13896">MTTSSTKTTAQAHGRYIRGSASKVRRVLDQIRGRTYRDALIMLEFMPYRSTEPITKVLRSAVANAENNLGLDPSSLMISTATADMGPPMKRYRPRAQGRAFAIKKQTCHISISVSATQSTNSEDSD</sequence>
<gene>
    <name evidence="1" type="primary">rplV</name>
    <name evidence="1" type="synonym">rpl22</name>
    <name type="ordered locus">NATL1_19981</name>
</gene>
<feature type="chain" id="PRO_0000354509" description="Large ribosomal subunit protein uL22">
    <location>
        <begin position="1"/>
        <end position="126"/>
    </location>
</feature>
<keyword id="KW-0687">Ribonucleoprotein</keyword>
<keyword id="KW-0689">Ribosomal protein</keyword>
<keyword id="KW-0694">RNA-binding</keyword>
<keyword id="KW-0699">rRNA-binding</keyword>
<organism>
    <name type="scientific">Prochlorococcus marinus (strain NATL1A)</name>
    <dbReference type="NCBI Taxonomy" id="167555"/>
    <lineage>
        <taxon>Bacteria</taxon>
        <taxon>Bacillati</taxon>
        <taxon>Cyanobacteriota</taxon>
        <taxon>Cyanophyceae</taxon>
        <taxon>Synechococcales</taxon>
        <taxon>Prochlorococcaceae</taxon>
        <taxon>Prochlorococcus</taxon>
    </lineage>
</organism>
<proteinExistence type="inferred from homology"/>
<name>RL22_PROM1</name>
<protein>
    <recommendedName>
        <fullName evidence="1">Large ribosomal subunit protein uL22</fullName>
    </recommendedName>
    <alternativeName>
        <fullName evidence="2">50S ribosomal protein L22</fullName>
    </alternativeName>
</protein>
<reference key="1">
    <citation type="journal article" date="2007" name="PLoS Genet.">
        <title>Patterns and implications of gene gain and loss in the evolution of Prochlorococcus.</title>
        <authorList>
            <person name="Kettler G.C."/>
            <person name="Martiny A.C."/>
            <person name="Huang K."/>
            <person name="Zucker J."/>
            <person name="Coleman M.L."/>
            <person name="Rodrigue S."/>
            <person name="Chen F."/>
            <person name="Lapidus A."/>
            <person name="Ferriera S."/>
            <person name="Johnson J."/>
            <person name="Steglich C."/>
            <person name="Church G.M."/>
            <person name="Richardson P."/>
            <person name="Chisholm S.W."/>
        </authorList>
    </citation>
    <scope>NUCLEOTIDE SEQUENCE [LARGE SCALE GENOMIC DNA]</scope>
    <source>
        <strain>NATL1A</strain>
    </source>
</reference>
<comment type="function">
    <text evidence="1">This protein binds specifically to 23S rRNA; its binding is stimulated by other ribosomal proteins, e.g. L4, L17, and L20. It is important during the early stages of 50S assembly. It makes multiple contacts with different domains of the 23S rRNA in the assembled 50S subunit and ribosome (By similarity).</text>
</comment>
<comment type="function">
    <text evidence="1">The globular domain of the protein is located near the polypeptide exit tunnel on the outside of the subunit, while an extended beta-hairpin is found that lines the wall of the exit tunnel in the center of the 70S ribosome.</text>
</comment>
<comment type="subunit">
    <text evidence="1">Part of the 50S ribosomal subunit.</text>
</comment>
<comment type="similarity">
    <text evidence="1">Belongs to the universal ribosomal protein uL22 family.</text>
</comment>
<dbReference type="EMBL" id="CP000553">
    <property type="protein sequence ID" value="ABM76554.1"/>
    <property type="molecule type" value="Genomic_DNA"/>
</dbReference>
<dbReference type="RefSeq" id="WP_011295468.1">
    <property type="nucleotide sequence ID" value="NC_008819.1"/>
</dbReference>
<dbReference type="SMR" id="A2C4Z4"/>
<dbReference type="KEGG" id="pme:NATL1_19981"/>
<dbReference type="eggNOG" id="COG0091">
    <property type="taxonomic scope" value="Bacteria"/>
</dbReference>
<dbReference type="HOGENOM" id="CLU_083987_3_3_3"/>
<dbReference type="Proteomes" id="UP000002592">
    <property type="component" value="Chromosome"/>
</dbReference>
<dbReference type="GO" id="GO:0022625">
    <property type="term" value="C:cytosolic large ribosomal subunit"/>
    <property type="evidence" value="ECO:0007669"/>
    <property type="project" value="TreeGrafter"/>
</dbReference>
<dbReference type="GO" id="GO:0019843">
    <property type="term" value="F:rRNA binding"/>
    <property type="evidence" value="ECO:0007669"/>
    <property type="project" value="UniProtKB-UniRule"/>
</dbReference>
<dbReference type="GO" id="GO:0003735">
    <property type="term" value="F:structural constituent of ribosome"/>
    <property type="evidence" value="ECO:0007669"/>
    <property type="project" value="InterPro"/>
</dbReference>
<dbReference type="GO" id="GO:0006412">
    <property type="term" value="P:translation"/>
    <property type="evidence" value="ECO:0007669"/>
    <property type="project" value="UniProtKB-UniRule"/>
</dbReference>
<dbReference type="CDD" id="cd00336">
    <property type="entry name" value="Ribosomal_L22"/>
    <property type="match status" value="1"/>
</dbReference>
<dbReference type="Gene3D" id="3.90.470.10">
    <property type="entry name" value="Ribosomal protein L22/L17"/>
    <property type="match status" value="1"/>
</dbReference>
<dbReference type="HAMAP" id="MF_01331_B">
    <property type="entry name" value="Ribosomal_uL22_B"/>
    <property type="match status" value="1"/>
</dbReference>
<dbReference type="InterPro" id="IPR001063">
    <property type="entry name" value="Ribosomal_uL22"/>
</dbReference>
<dbReference type="InterPro" id="IPR005727">
    <property type="entry name" value="Ribosomal_uL22_bac/chlpt-type"/>
</dbReference>
<dbReference type="InterPro" id="IPR047867">
    <property type="entry name" value="Ribosomal_uL22_bac/org-type"/>
</dbReference>
<dbReference type="InterPro" id="IPR018260">
    <property type="entry name" value="Ribosomal_uL22_CS"/>
</dbReference>
<dbReference type="InterPro" id="IPR036394">
    <property type="entry name" value="Ribosomal_uL22_sf"/>
</dbReference>
<dbReference type="NCBIfam" id="TIGR01044">
    <property type="entry name" value="rplV_bact"/>
    <property type="match status" value="1"/>
</dbReference>
<dbReference type="PANTHER" id="PTHR13501">
    <property type="entry name" value="CHLOROPLAST 50S RIBOSOMAL PROTEIN L22-RELATED"/>
    <property type="match status" value="1"/>
</dbReference>
<dbReference type="PANTHER" id="PTHR13501:SF8">
    <property type="entry name" value="LARGE RIBOSOMAL SUBUNIT PROTEIN UL22M"/>
    <property type="match status" value="1"/>
</dbReference>
<dbReference type="Pfam" id="PF00237">
    <property type="entry name" value="Ribosomal_L22"/>
    <property type="match status" value="1"/>
</dbReference>
<dbReference type="SUPFAM" id="SSF54843">
    <property type="entry name" value="Ribosomal protein L22"/>
    <property type="match status" value="1"/>
</dbReference>
<dbReference type="PROSITE" id="PS00464">
    <property type="entry name" value="RIBOSOMAL_L22"/>
    <property type="match status" value="1"/>
</dbReference>
<accession>A2C4Z4</accession>
<evidence type="ECO:0000255" key="1">
    <source>
        <dbReference type="HAMAP-Rule" id="MF_01331"/>
    </source>
</evidence>
<evidence type="ECO:0000305" key="2"/>